<feature type="chain" id="PRO_1000075444" description="Phosphomethylpyrimidine synthase">
    <location>
        <begin position="1"/>
        <end position="631"/>
    </location>
</feature>
<feature type="binding site" evidence="1">
    <location>
        <position position="239"/>
    </location>
    <ligand>
        <name>substrate</name>
    </ligand>
</feature>
<feature type="binding site" evidence="1">
    <location>
        <position position="268"/>
    </location>
    <ligand>
        <name>substrate</name>
    </ligand>
</feature>
<feature type="binding site" evidence="1">
    <location>
        <position position="297"/>
    </location>
    <ligand>
        <name>substrate</name>
    </ligand>
</feature>
<feature type="binding site" evidence="1">
    <location>
        <position position="333"/>
    </location>
    <ligand>
        <name>substrate</name>
    </ligand>
</feature>
<feature type="binding site" evidence="1">
    <location>
        <begin position="353"/>
        <end position="355"/>
    </location>
    <ligand>
        <name>substrate</name>
    </ligand>
</feature>
<feature type="binding site" evidence="1">
    <location>
        <begin position="394"/>
        <end position="397"/>
    </location>
    <ligand>
        <name>substrate</name>
    </ligand>
</feature>
<feature type="binding site" evidence="1">
    <location>
        <position position="433"/>
    </location>
    <ligand>
        <name>substrate</name>
    </ligand>
</feature>
<feature type="binding site" evidence="1">
    <location>
        <position position="437"/>
    </location>
    <ligand>
        <name>Zn(2+)</name>
        <dbReference type="ChEBI" id="CHEBI:29105"/>
    </ligand>
</feature>
<feature type="binding site" evidence="1">
    <location>
        <position position="460"/>
    </location>
    <ligand>
        <name>substrate</name>
    </ligand>
</feature>
<feature type="binding site" evidence="1">
    <location>
        <position position="501"/>
    </location>
    <ligand>
        <name>Zn(2+)</name>
        <dbReference type="ChEBI" id="CHEBI:29105"/>
    </ligand>
</feature>
<feature type="binding site" evidence="1">
    <location>
        <position position="581"/>
    </location>
    <ligand>
        <name>[4Fe-4S] cluster</name>
        <dbReference type="ChEBI" id="CHEBI:49883"/>
        <note>4Fe-4S-S-AdoMet</note>
    </ligand>
</feature>
<feature type="binding site" evidence="1">
    <location>
        <position position="584"/>
    </location>
    <ligand>
        <name>[4Fe-4S] cluster</name>
        <dbReference type="ChEBI" id="CHEBI:49883"/>
        <note>4Fe-4S-S-AdoMet</note>
    </ligand>
</feature>
<feature type="binding site" evidence="1">
    <location>
        <position position="589"/>
    </location>
    <ligand>
        <name>[4Fe-4S] cluster</name>
        <dbReference type="ChEBI" id="CHEBI:49883"/>
        <note>4Fe-4S-S-AdoMet</note>
    </ligand>
</feature>
<sequence length="631" mass="70800">MSTTTLTRREQRAKAQHFIDTLEGTAFPNSKRIYVTGSQHDIRVPMREIQLSPTLIGGSKDNPQFEENEAVPVYDTSGPYGDPEVAINVQQGLAKLRQPWIDARNDSEELDDRSSAYTRERLADDGLDDLRFTGLLTPKRAKAGKRVTQLHYARQGIVTPEMEFIAIRENMGRERIRSEVLRHQHPGMNFGARLPENITPEFVRDEVAAGRAIIPANINHPESEPMIIGRNFLVKVNANIGNSAVTSSIEEEVEKLVWSTRWGADTVMDLSTGRYIHETREWILRNSPVPIGTVPIYQALEKVNGIAEDLTWEAFRDTLLEQAEQGVDYFTIHAGVLLRYVPMTAKRLTGIVSRGGSIMAKWCLSHHKENFLFEHFREICEICAAYDVSLSLGDGLRPGSIQDANDEAQFSELHTLGELTKIAWEYDVQVMIEGPGHVPMHMIQRNMTEELESCHEAPFYTLGPLTTDIAPGYDHFTSGIGAAMIGWFGCAMLCYVTPKEHLGLPNKEDVKQGLITYKIAAHAADLAKGHPGAQIRDNAMSKARFEFRWEDQFNLALDPFTARAYHDETLPQESGKVAHFCSMCGPKFCSMKISQEVRDYAAAQAIEVGMADMSENFRAKGGEIYLKREEA</sequence>
<evidence type="ECO:0000255" key="1">
    <source>
        <dbReference type="HAMAP-Rule" id="MF_00089"/>
    </source>
</evidence>
<gene>
    <name evidence="1" type="primary">thiC</name>
    <name type="ordered locus">SPAB_05154</name>
</gene>
<keyword id="KW-0004">4Fe-4S</keyword>
<keyword id="KW-0408">Iron</keyword>
<keyword id="KW-0411">Iron-sulfur</keyword>
<keyword id="KW-0456">Lyase</keyword>
<keyword id="KW-0479">Metal-binding</keyword>
<keyword id="KW-0949">S-adenosyl-L-methionine</keyword>
<keyword id="KW-0784">Thiamine biosynthesis</keyword>
<keyword id="KW-0862">Zinc</keyword>
<protein>
    <recommendedName>
        <fullName evidence="1">Phosphomethylpyrimidine synthase</fullName>
        <ecNumber evidence="1">4.1.99.17</ecNumber>
    </recommendedName>
    <alternativeName>
        <fullName evidence="1">Hydroxymethylpyrimidine phosphate synthase</fullName>
        <shortName evidence="1">HMP-P synthase</shortName>
        <shortName evidence="1">HMP-phosphate synthase</shortName>
        <shortName evidence="1">HMPP synthase</shortName>
    </alternativeName>
    <alternativeName>
        <fullName evidence="1">Thiamine biosynthesis protein ThiC</fullName>
    </alternativeName>
</protein>
<organism>
    <name type="scientific">Salmonella paratyphi B (strain ATCC BAA-1250 / SPB7)</name>
    <dbReference type="NCBI Taxonomy" id="1016998"/>
    <lineage>
        <taxon>Bacteria</taxon>
        <taxon>Pseudomonadati</taxon>
        <taxon>Pseudomonadota</taxon>
        <taxon>Gammaproteobacteria</taxon>
        <taxon>Enterobacterales</taxon>
        <taxon>Enterobacteriaceae</taxon>
        <taxon>Salmonella</taxon>
    </lineage>
</organism>
<accession>A9N0K6</accession>
<name>THIC_SALPB</name>
<dbReference type="EC" id="4.1.99.17" evidence="1"/>
<dbReference type="EMBL" id="CP000886">
    <property type="protein sequence ID" value="ABX70435.1"/>
    <property type="molecule type" value="Genomic_DNA"/>
</dbReference>
<dbReference type="RefSeq" id="WP_000108420.1">
    <property type="nucleotide sequence ID" value="NC_010102.1"/>
</dbReference>
<dbReference type="SMR" id="A9N0K6"/>
<dbReference type="KEGG" id="spq:SPAB_05154"/>
<dbReference type="PATRIC" id="fig|1016998.12.peg.4828"/>
<dbReference type="HOGENOM" id="CLU_013181_2_1_6"/>
<dbReference type="BioCyc" id="SENT1016998:SPAB_RS20975-MONOMER"/>
<dbReference type="UniPathway" id="UPA00060"/>
<dbReference type="Proteomes" id="UP000008556">
    <property type="component" value="Chromosome"/>
</dbReference>
<dbReference type="GO" id="GO:0005829">
    <property type="term" value="C:cytosol"/>
    <property type="evidence" value="ECO:0007669"/>
    <property type="project" value="TreeGrafter"/>
</dbReference>
<dbReference type="GO" id="GO:0051539">
    <property type="term" value="F:4 iron, 4 sulfur cluster binding"/>
    <property type="evidence" value="ECO:0007669"/>
    <property type="project" value="UniProtKB-KW"/>
</dbReference>
<dbReference type="GO" id="GO:0016830">
    <property type="term" value="F:carbon-carbon lyase activity"/>
    <property type="evidence" value="ECO:0007669"/>
    <property type="project" value="InterPro"/>
</dbReference>
<dbReference type="GO" id="GO:0008270">
    <property type="term" value="F:zinc ion binding"/>
    <property type="evidence" value="ECO:0007669"/>
    <property type="project" value="UniProtKB-UniRule"/>
</dbReference>
<dbReference type="GO" id="GO:0009228">
    <property type="term" value="P:thiamine biosynthetic process"/>
    <property type="evidence" value="ECO:0007669"/>
    <property type="project" value="UniProtKB-KW"/>
</dbReference>
<dbReference type="GO" id="GO:0009229">
    <property type="term" value="P:thiamine diphosphate biosynthetic process"/>
    <property type="evidence" value="ECO:0007669"/>
    <property type="project" value="UniProtKB-UniRule"/>
</dbReference>
<dbReference type="FunFam" id="3.20.20.540:FF:000001">
    <property type="entry name" value="Phosphomethylpyrimidine synthase"/>
    <property type="match status" value="1"/>
</dbReference>
<dbReference type="Gene3D" id="6.10.250.620">
    <property type="match status" value="1"/>
</dbReference>
<dbReference type="Gene3D" id="3.20.20.540">
    <property type="entry name" value="Radical SAM ThiC family, central domain"/>
    <property type="match status" value="1"/>
</dbReference>
<dbReference type="HAMAP" id="MF_00089">
    <property type="entry name" value="ThiC"/>
    <property type="match status" value="1"/>
</dbReference>
<dbReference type="InterPro" id="IPR037509">
    <property type="entry name" value="ThiC"/>
</dbReference>
<dbReference type="InterPro" id="IPR025747">
    <property type="entry name" value="ThiC-associated_dom"/>
</dbReference>
<dbReference type="InterPro" id="IPR038521">
    <property type="entry name" value="ThiC/Bza_core_dom"/>
</dbReference>
<dbReference type="InterPro" id="IPR002817">
    <property type="entry name" value="ThiC/BzaA/B"/>
</dbReference>
<dbReference type="NCBIfam" id="NF006763">
    <property type="entry name" value="PRK09284.1"/>
    <property type="match status" value="1"/>
</dbReference>
<dbReference type="NCBIfam" id="NF009895">
    <property type="entry name" value="PRK13352.1"/>
    <property type="match status" value="1"/>
</dbReference>
<dbReference type="NCBIfam" id="TIGR00190">
    <property type="entry name" value="thiC"/>
    <property type="match status" value="1"/>
</dbReference>
<dbReference type="PANTHER" id="PTHR30557:SF1">
    <property type="entry name" value="PHOSPHOMETHYLPYRIMIDINE SYNTHASE, CHLOROPLASTIC"/>
    <property type="match status" value="1"/>
</dbReference>
<dbReference type="PANTHER" id="PTHR30557">
    <property type="entry name" value="THIAMINE BIOSYNTHESIS PROTEIN THIC"/>
    <property type="match status" value="1"/>
</dbReference>
<dbReference type="Pfam" id="PF13667">
    <property type="entry name" value="ThiC-associated"/>
    <property type="match status" value="1"/>
</dbReference>
<dbReference type="Pfam" id="PF01964">
    <property type="entry name" value="ThiC_Rad_SAM"/>
    <property type="match status" value="1"/>
</dbReference>
<dbReference type="SFLD" id="SFLDF00407">
    <property type="entry name" value="phosphomethylpyrimidine_syntha"/>
    <property type="match status" value="1"/>
</dbReference>
<dbReference type="SFLD" id="SFLDG01114">
    <property type="entry name" value="phosphomethylpyrimidine_syntha"/>
    <property type="match status" value="1"/>
</dbReference>
<dbReference type="SFLD" id="SFLDS00113">
    <property type="entry name" value="Radical_SAM_Phosphomethylpyrim"/>
    <property type="match status" value="1"/>
</dbReference>
<reference key="1">
    <citation type="submission" date="2007-11" db="EMBL/GenBank/DDBJ databases">
        <authorList>
            <consortium name="The Salmonella enterica serovar Paratyphi B Genome Sequencing Project"/>
            <person name="McClelland M."/>
            <person name="Sanderson E.K."/>
            <person name="Porwollik S."/>
            <person name="Spieth J."/>
            <person name="Clifton W.S."/>
            <person name="Fulton R."/>
            <person name="Cordes M."/>
            <person name="Wollam A."/>
            <person name="Shah N."/>
            <person name="Pepin K."/>
            <person name="Bhonagiri V."/>
            <person name="Nash W."/>
            <person name="Johnson M."/>
            <person name="Thiruvilangam P."/>
            <person name="Wilson R."/>
        </authorList>
    </citation>
    <scope>NUCLEOTIDE SEQUENCE [LARGE SCALE GENOMIC DNA]</scope>
    <source>
        <strain>ATCC BAA-1250 / SPB7</strain>
    </source>
</reference>
<proteinExistence type="inferred from homology"/>
<comment type="function">
    <text evidence="1">Catalyzes the synthesis of the hydroxymethylpyrimidine phosphate (HMP-P) moiety of thiamine from aminoimidazole ribotide (AIR) in a radical S-adenosyl-L-methionine (SAM)-dependent reaction.</text>
</comment>
<comment type="catalytic activity">
    <reaction evidence="1">
        <text>5-amino-1-(5-phospho-beta-D-ribosyl)imidazole + S-adenosyl-L-methionine = 4-amino-2-methyl-5-(phosphooxymethyl)pyrimidine + CO + 5'-deoxyadenosine + formate + L-methionine + 3 H(+)</text>
        <dbReference type="Rhea" id="RHEA:24840"/>
        <dbReference type="ChEBI" id="CHEBI:15378"/>
        <dbReference type="ChEBI" id="CHEBI:15740"/>
        <dbReference type="ChEBI" id="CHEBI:17245"/>
        <dbReference type="ChEBI" id="CHEBI:17319"/>
        <dbReference type="ChEBI" id="CHEBI:57844"/>
        <dbReference type="ChEBI" id="CHEBI:58354"/>
        <dbReference type="ChEBI" id="CHEBI:59789"/>
        <dbReference type="ChEBI" id="CHEBI:137981"/>
        <dbReference type="EC" id="4.1.99.17"/>
    </reaction>
</comment>
<comment type="cofactor">
    <cofactor evidence="1">
        <name>[4Fe-4S] cluster</name>
        <dbReference type="ChEBI" id="CHEBI:49883"/>
    </cofactor>
    <text evidence="1">Binds 1 [4Fe-4S] cluster per subunit. The cluster is coordinated with 3 cysteines and an exchangeable S-adenosyl-L-methionine.</text>
</comment>
<comment type="pathway">
    <text evidence="1">Cofactor biosynthesis; thiamine diphosphate biosynthesis.</text>
</comment>
<comment type="subunit">
    <text evidence="1">Homodimer.</text>
</comment>
<comment type="similarity">
    <text evidence="1">Belongs to the ThiC family.</text>
</comment>